<protein>
    <recommendedName>
        <fullName evidence="1">Peptide methionine sulfoxide reductase MsrA</fullName>
        <shortName evidence="1">Protein-methionine-S-oxide reductase</shortName>
        <ecNumber evidence="1">1.8.4.11</ecNumber>
    </recommendedName>
    <alternativeName>
        <fullName evidence="1">Peptide-methionine (S)-S-oxide reductase</fullName>
        <shortName evidence="1">Peptide Met(O) reductase</shortName>
    </alternativeName>
</protein>
<feature type="chain" id="PRO_1000073499" description="Peptide methionine sulfoxide reductase MsrA">
    <location>
        <begin position="1"/>
        <end position="165"/>
    </location>
</feature>
<feature type="active site" evidence="1">
    <location>
        <position position="10"/>
    </location>
</feature>
<dbReference type="EC" id="1.8.4.11" evidence="1"/>
<dbReference type="EMBL" id="CP000814">
    <property type="protein sequence ID" value="ABV52195.1"/>
    <property type="molecule type" value="Genomic_DNA"/>
</dbReference>
<dbReference type="RefSeq" id="WP_002866497.1">
    <property type="nucleotide sequence ID" value="NC_009839.1"/>
</dbReference>
<dbReference type="SMR" id="A8FL58"/>
<dbReference type="KEGG" id="cju:C8J_0596"/>
<dbReference type="HOGENOM" id="CLU_031040_10_0_7"/>
<dbReference type="GO" id="GO:0033744">
    <property type="term" value="F:L-methionine:thioredoxin-disulfide S-oxidoreductase activity"/>
    <property type="evidence" value="ECO:0007669"/>
    <property type="project" value="RHEA"/>
</dbReference>
<dbReference type="GO" id="GO:0008113">
    <property type="term" value="F:peptide-methionine (S)-S-oxide reductase activity"/>
    <property type="evidence" value="ECO:0007669"/>
    <property type="project" value="UniProtKB-UniRule"/>
</dbReference>
<dbReference type="GO" id="GO:0036211">
    <property type="term" value="P:protein modification process"/>
    <property type="evidence" value="ECO:0007669"/>
    <property type="project" value="UniProtKB-UniRule"/>
</dbReference>
<dbReference type="Gene3D" id="3.30.1060.10">
    <property type="entry name" value="Peptide methionine sulphoxide reductase MsrA"/>
    <property type="match status" value="1"/>
</dbReference>
<dbReference type="HAMAP" id="MF_01401">
    <property type="entry name" value="MsrA"/>
    <property type="match status" value="1"/>
</dbReference>
<dbReference type="InterPro" id="IPR002569">
    <property type="entry name" value="Met_Sox_Rdtase_MsrA_dom"/>
</dbReference>
<dbReference type="InterPro" id="IPR036509">
    <property type="entry name" value="Met_Sox_Rdtase_MsrA_sf"/>
</dbReference>
<dbReference type="NCBIfam" id="TIGR00401">
    <property type="entry name" value="msrA"/>
    <property type="match status" value="1"/>
</dbReference>
<dbReference type="PANTHER" id="PTHR43774">
    <property type="entry name" value="PEPTIDE METHIONINE SULFOXIDE REDUCTASE"/>
    <property type="match status" value="1"/>
</dbReference>
<dbReference type="PANTHER" id="PTHR43774:SF1">
    <property type="entry name" value="PEPTIDE METHIONINE SULFOXIDE REDUCTASE MSRA 2"/>
    <property type="match status" value="1"/>
</dbReference>
<dbReference type="Pfam" id="PF01625">
    <property type="entry name" value="PMSR"/>
    <property type="match status" value="1"/>
</dbReference>
<dbReference type="SUPFAM" id="SSF55068">
    <property type="entry name" value="Peptide methionine sulfoxide reductase"/>
    <property type="match status" value="1"/>
</dbReference>
<organism>
    <name type="scientific">Campylobacter jejuni subsp. jejuni serotype O:6 (strain 81116 / NCTC 11828)</name>
    <dbReference type="NCBI Taxonomy" id="407148"/>
    <lineage>
        <taxon>Bacteria</taxon>
        <taxon>Pseudomonadati</taxon>
        <taxon>Campylobacterota</taxon>
        <taxon>Epsilonproteobacteria</taxon>
        <taxon>Campylobacterales</taxon>
        <taxon>Campylobacteraceae</taxon>
        <taxon>Campylobacter</taxon>
    </lineage>
</organism>
<comment type="function">
    <text evidence="1">Has an important function as a repair enzyme for proteins that have been inactivated by oxidation. Catalyzes the reversible oxidation-reduction of methionine sulfoxide in proteins to methionine.</text>
</comment>
<comment type="catalytic activity">
    <reaction evidence="1">
        <text>L-methionyl-[protein] + [thioredoxin]-disulfide + H2O = L-methionyl-(S)-S-oxide-[protein] + [thioredoxin]-dithiol</text>
        <dbReference type="Rhea" id="RHEA:14217"/>
        <dbReference type="Rhea" id="RHEA-COMP:10698"/>
        <dbReference type="Rhea" id="RHEA-COMP:10700"/>
        <dbReference type="Rhea" id="RHEA-COMP:12313"/>
        <dbReference type="Rhea" id="RHEA-COMP:12315"/>
        <dbReference type="ChEBI" id="CHEBI:15377"/>
        <dbReference type="ChEBI" id="CHEBI:16044"/>
        <dbReference type="ChEBI" id="CHEBI:29950"/>
        <dbReference type="ChEBI" id="CHEBI:44120"/>
        <dbReference type="ChEBI" id="CHEBI:50058"/>
        <dbReference type="EC" id="1.8.4.11"/>
    </reaction>
</comment>
<comment type="catalytic activity">
    <reaction evidence="1">
        <text>[thioredoxin]-disulfide + L-methionine + H2O = L-methionine (S)-S-oxide + [thioredoxin]-dithiol</text>
        <dbReference type="Rhea" id="RHEA:19993"/>
        <dbReference type="Rhea" id="RHEA-COMP:10698"/>
        <dbReference type="Rhea" id="RHEA-COMP:10700"/>
        <dbReference type="ChEBI" id="CHEBI:15377"/>
        <dbReference type="ChEBI" id="CHEBI:29950"/>
        <dbReference type="ChEBI" id="CHEBI:50058"/>
        <dbReference type="ChEBI" id="CHEBI:57844"/>
        <dbReference type="ChEBI" id="CHEBI:58772"/>
        <dbReference type="EC" id="1.8.4.11"/>
    </reaction>
</comment>
<comment type="similarity">
    <text evidence="1">Belongs to the MsrA Met sulfoxide reductase family.</text>
</comment>
<accession>A8FL58</accession>
<proteinExistence type="inferred from homology"/>
<name>MSRA_CAMJ8</name>
<reference key="1">
    <citation type="journal article" date="2007" name="J. Bacteriol.">
        <title>The complete genome sequence of Campylobacter jejuni strain 81116 (NCTC11828).</title>
        <authorList>
            <person name="Pearson B.M."/>
            <person name="Gaskin D.J.H."/>
            <person name="Segers R.P.A.M."/>
            <person name="Wells J.M."/>
            <person name="Nuijten P.J.M."/>
            <person name="van Vliet A.H.M."/>
        </authorList>
    </citation>
    <scope>NUCLEOTIDE SEQUENCE [LARGE SCALE GENOMIC DNA]</scope>
    <source>
        <strain>81116 / NCTC 11828</strain>
    </source>
</reference>
<gene>
    <name evidence="1" type="primary">msrA</name>
    <name type="ordered locus">C8J_0596</name>
</gene>
<sequence length="165" mass="18824">MKNIVLGGGCFWCVEAVFERLKGVIDTEVGYSGGNPNPSYESVCNGDGNIEVVKINYDEKQISLLEILTLFFKIHDPTSIDKQGGDIGIQYRSIIFYENEEDKILAQNFIEEQQKIFSKKIVTKISRLQTYYKAENYHQHYFINNPNQGYCQAVIAPKLQKIQSG</sequence>
<evidence type="ECO:0000255" key="1">
    <source>
        <dbReference type="HAMAP-Rule" id="MF_01401"/>
    </source>
</evidence>
<keyword id="KW-0560">Oxidoreductase</keyword>